<name>UREF_SINMW</name>
<sequence length="223" mass="23469">MAEHADTQALLRLVTWLSPAFPVGSFSYSGGLEQAIHQGLVTSADDLRLWCETLLERGNTWNDALLLSESYRAYGDAQRLIAVSELAEALAGSRERHMETMLLGEAFLAAAGHWPHPSLAVLGTKAAYPVSVGAVAGAHRTGLKPALAAFLNATVSNAVSVAIRCGITGQRDGVGVLARVEDTIGAVVARAAAASLEDLGGATFIAEIASLKHENLHSRLFRS</sequence>
<gene>
    <name evidence="1" type="primary">ureF</name>
    <name type="ordered locus">Smed_2378</name>
</gene>
<evidence type="ECO:0000255" key="1">
    <source>
        <dbReference type="HAMAP-Rule" id="MF_01385"/>
    </source>
</evidence>
<accession>A6UC30</accession>
<protein>
    <recommendedName>
        <fullName evidence="1">Urease accessory protein UreF</fullName>
    </recommendedName>
</protein>
<reference key="1">
    <citation type="submission" date="2007-06" db="EMBL/GenBank/DDBJ databases">
        <title>Complete sequence of Sinorhizobium medicae WSM419 chromosome.</title>
        <authorList>
            <consortium name="US DOE Joint Genome Institute"/>
            <person name="Copeland A."/>
            <person name="Lucas S."/>
            <person name="Lapidus A."/>
            <person name="Barry K."/>
            <person name="Glavina del Rio T."/>
            <person name="Dalin E."/>
            <person name="Tice H."/>
            <person name="Pitluck S."/>
            <person name="Chain P."/>
            <person name="Malfatti S."/>
            <person name="Shin M."/>
            <person name="Vergez L."/>
            <person name="Schmutz J."/>
            <person name="Larimer F."/>
            <person name="Land M."/>
            <person name="Hauser L."/>
            <person name="Kyrpides N."/>
            <person name="Mikhailova N."/>
            <person name="Reeve W.G."/>
            <person name="Richardson P."/>
        </authorList>
    </citation>
    <scope>NUCLEOTIDE SEQUENCE [LARGE SCALE GENOMIC DNA]</scope>
    <source>
        <strain>WSM419</strain>
    </source>
</reference>
<organism>
    <name type="scientific">Sinorhizobium medicae (strain WSM419)</name>
    <name type="common">Ensifer medicae</name>
    <dbReference type="NCBI Taxonomy" id="366394"/>
    <lineage>
        <taxon>Bacteria</taxon>
        <taxon>Pseudomonadati</taxon>
        <taxon>Pseudomonadota</taxon>
        <taxon>Alphaproteobacteria</taxon>
        <taxon>Hyphomicrobiales</taxon>
        <taxon>Rhizobiaceae</taxon>
        <taxon>Sinorhizobium/Ensifer group</taxon>
        <taxon>Sinorhizobium</taxon>
    </lineage>
</organism>
<keyword id="KW-0143">Chaperone</keyword>
<keyword id="KW-0963">Cytoplasm</keyword>
<keyword id="KW-0996">Nickel insertion</keyword>
<comment type="function">
    <text evidence="1">Required for maturation of urease via the functional incorporation of the urease nickel metallocenter.</text>
</comment>
<comment type="subunit">
    <text evidence="1">UreD, UreF and UreG form a complex that acts as a GTP-hydrolysis-dependent molecular chaperone, activating the urease apoprotein by helping to assemble the nickel containing metallocenter of UreC. The UreE protein probably delivers the nickel.</text>
</comment>
<comment type="subcellular location">
    <subcellularLocation>
        <location evidence="1">Cytoplasm</location>
    </subcellularLocation>
</comment>
<comment type="similarity">
    <text evidence="1">Belongs to the UreF family.</text>
</comment>
<proteinExistence type="inferred from homology"/>
<dbReference type="EMBL" id="CP000738">
    <property type="protein sequence ID" value="ABR61210.1"/>
    <property type="molecule type" value="Genomic_DNA"/>
</dbReference>
<dbReference type="RefSeq" id="WP_012066601.1">
    <property type="nucleotide sequence ID" value="NC_009636.1"/>
</dbReference>
<dbReference type="RefSeq" id="YP_001328045.1">
    <property type="nucleotide sequence ID" value="NC_009636.1"/>
</dbReference>
<dbReference type="SMR" id="A6UC30"/>
<dbReference type="STRING" id="366394.Smed_2378"/>
<dbReference type="KEGG" id="smd:Smed_2378"/>
<dbReference type="PATRIC" id="fig|366394.8.peg.5559"/>
<dbReference type="eggNOG" id="COG0830">
    <property type="taxonomic scope" value="Bacteria"/>
</dbReference>
<dbReference type="HOGENOM" id="CLU_049215_2_0_5"/>
<dbReference type="OrthoDB" id="9798772at2"/>
<dbReference type="Proteomes" id="UP000001108">
    <property type="component" value="Chromosome"/>
</dbReference>
<dbReference type="GO" id="GO:0005737">
    <property type="term" value="C:cytoplasm"/>
    <property type="evidence" value="ECO:0007669"/>
    <property type="project" value="UniProtKB-SubCell"/>
</dbReference>
<dbReference type="GO" id="GO:0016151">
    <property type="term" value="F:nickel cation binding"/>
    <property type="evidence" value="ECO:0007669"/>
    <property type="project" value="UniProtKB-UniRule"/>
</dbReference>
<dbReference type="Gene3D" id="1.10.4190.10">
    <property type="entry name" value="Urease accessory protein UreF"/>
    <property type="match status" value="1"/>
</dbReference>
<dbReference type="HAMAP" id="MF_01385">
    <property type="entry name" value="UreF"/>
    <property type="match status" value="1"/>
</dbReference>
<dbReference type="InterPro" id="IPR002639">
    <property type="entry name" value="UreF"/>
</dbReference>
<dbReference type="InterPro" id="IPR038277">
    <property type="entry name" value="UreF_sf"/>
</dbReference>
<dbReference type="PANTHER" id="PTHR33620">
    <property type="entry name" value="UREASE ACCESSORY PROTEIN F"/>
    <property type="match status" value="1"/>
</dbReference>
<dbReference type="PANTHER" id="PTHR33620:SF1">
    <property type="entry name" value="UREASE ACCESSORY PROTEIN F"/>
    <property type="match status" value="1"/>
</dbReference>
<dbReference type="Pfam" id="PF01730">
    <property type="entry name" value="UreF"/>
    <property type="match status" value="1"/>
</dbReference>
<dbReference type="PIRSF" id="PIRSF009467">
    <property type="entry name" value="Ureas_acces_UreF"/>
    <property type="match status" value="1"/>
</dbReference>
<feature type="chain" id="PRO_0000344178" description="Urease accessory protein UreF">
    <location>
        <begin position="1"/>
        <end position="223"/>
    </location>
</feature>